<accession>B5Z8V7</accession>
<dbReference type="EMBL" id="CP001173">
    <property type="protein sequence ID" value="ACI28006.1"/>
    <property type="molecule type" value="Genomic_DNA"/>
</dbReference>
<dbReference type="RefSeq" id="WP_000616110.1">
    <property type="nucleotide sequence ID" value="NC_011333.1"/>
</dbReference>
<dbReference type="SMR" id="B5Z8V7"/>
<dbReference type="GeneID" id="31757675"/>
<dbReference type="KEGG" id="hpg:HPG27_1258"/>
<dbReference type="HOGENOM" id="CLU_095071_2_1_7"/>
<dbReference type="Proteomes" id="UP000001735">
    <property type="component" value="Chromosome"/>
</dbReference>
<dbReference type="GO" id="GO:0022625">
    <property type="term" value="C:cytosolic large ribosomal subunit"/>
    <property type="evidence" value="ECO:0007669"/>
    <property type="project" value="TreeGrafter"/>
</dbReference>
<dbReference type="GO" id="GO:0070180">
    <property type="term" value="F:large ribosomal subunit rRNA binding"/>
    <property type="evidence" value="ECO:0007669"/>
    <property type="project" value="TreeGrafter"/>
</dbReference>
<dbReference type="GO" id="GO:0003735">
    <property type="term" value="F:structural constituent of ribosome"/>
    <property type="evidence" value="ECO:0007669"/>
    <property type="project" value="InterPro"/>
</dbReference>
<dbReference type="GO" id="GO:0006412">
    <property type="term" value="P:translation"/>
    <property type="evidence" value="ECO:0007669"/>
    <property type="project" value="UniProtKB-UniRule"/>
</dbReference>
<dbReference type="CDD" id="cd00337">
    <property type="entry name" value="Ribosomal_uL14"/>
    <property type="match status" value="1"/>
</dbReference>
<dbReference type="FunFam" id="2.40.150.20:FF:000001">
    <property type="entry name" value="50S ribosomal protein L14"/>
    <property type="match status" value="1"/>
</dbReference>
<dbReference type="Gene3D" id="2.40.150.20">
    <property type="entry name" value="Ribosomal protein L14"/>
    <property type="match status" value="1"/>
</dbReference>
<dbReference type="HAMAP" id="MF_01367">
    <property type="entry name" value="Ribosomal_uL14"/>
    <property type="match status" value="1"/>
</dbReference>
<dbReference type="InterPro" id="IPR000218">
    <property type="entry name" value="Ribosomal_uL14"/>
</dbReference>
<dbReference type="InterPro" id="IPR005745">
    <property type="entry name" value="Ribosomal_uL14_bac-type"/>
</dbReference>
<dbReference type="InterPro" id="IPR019972">
    <property type="entry name" value="Ribosomal_uL14_CS"/>
</dbReference>
<dbReference type="InterPro" id="IPR036853">
    <property type="entry name" value="Ribosomal_uL14_sf"/>
</dbReference>
<dbReference type="NCBIfam" id="TIGR01067">
    <property type="entry name" value="rplN_bact"/>
    <property type="match status" value="1"/>
</dbReference>
<dbReference type="PANTHER" id="PTHR11761">
    <property type="entry name" value="50S/60S RIBOSOMAL PROTEIN L14/L23"/>
    <property type="match status" value="1"/>
</dbReference>
<dbReference type="PANTHER" id="PTHR11761:SF3">
    <property type="entry name" value="LARGE RIBOSOMAL SUBUNIT PROTEIN UL14M"/>
    <property type="match status" value="1"/>
</dbReference>
<dbReference type="Pfam" id="PF00238">
    <property type="entry name" value="Ribosomal_L14"/>
    <property type="match status" value="1"/>
</dbReference>
<dbReference type="SMART" id="SM01374">
    <property type="entry name" value="Ribosomal_L14"/>
    <property type="match status" value="1"/>
</dbReference>
<dbReference type="SUPFAM" id="SSF50193">
    <property type="entry name" value="Ribosomal protein L14"/>
    <property type="match status" value="1"/>
</dbReference>
<dbReference type="PROSITE" id="PS00049">
    <property type="entry name" value="RIBOSOMAL_L14"/>
    <property type="match status" value="1"/>
</dbReference>
<protein>
    <recommendedName>
        <fullName evidence="1">Large ribosomal subunit protein uL14</fullName>
    </recommendedName>
    <alternativeName>
        <fullName evidence="2">50S ribosomal protein L14</fullName>
    </alternativeName>
</protein>
<reference key="1">
    <citation type="journal article" date="2009" name="J. Bacteriol.">
        <title>The complete genome sequence of Helicobacter pylori strain G27.</title>
        <authorList>
            <person name="Baltrus D.A."/>
            <person name="Amieva M.R."/>
            <person name="Covacci A."/>
            <person name="Lowe T.M."/>
            <person name="Merrell D.S."/>
            <person name="Ottemann K.M."/>
            <person name="Stein M."/>
            <person name="Salama N.R."/>
            <person name="Guillemin K."/>
        </authorList>
    </citation>
    <scope>NUCLEOTIDE SEQUENCE [LARGE SCALE GENOMIC DNA]</scope>
    <source>
        <strain>G27</strain>
    </source>
</reference>
<organism>
    <name type="scientific">Helicobacter pylori (strain G27)</name>
    <dbReference type="NCBI Taxonomy" id="563041"/>
    <lineage>
        <taxon>Bacteria</taxon>
        <taxon>Pseudomonadati</taxon>
        <taxon>Campylobacterota</taxon>
        <taxon>Epsilonproteobacteria</taxon>
        <taxon>Campylobacterales</taxon>
        <taxon>Helicobacteraceae</taxon>
        <taxon>Helicobacter</taxon>
    </lineage>
</organism>
<comment type="function">
    <text evidence="1">Binds to 23S rRNA. Forms part of two intersubunit bridges in the 70S ribosome.</text>
</comment>
<comment type="subunit">
    <text evidence="1">Part of the 50S ribosomal subunit. Forms a cluster with proteins L3 and L19. In the 70S ribosome, L14 and L19 interact and together make contacts with the 16S rRNA in bridges B5 and B8.</text>
</comment>
<comment type="similarity">
    <text evidence="1">Belongs to the universal ribosomal protein uL14 family.</text>
</comment>
<sequence>MIQSFTRLNVADNSGAKEIMCIKVLGGSHKRYASVGSVIVASVKKAIPNGKVKRGQVVKAVVVRTKKEIQRKNGSLVRFDDNAAVILDAKKDPVGTRIFGPVSREVRYANFMKIISLAPEVV</sequence>
<gene>
    <name evidence="1" type="primary">rplN</name>
    <name type="ordered locus">HPG27_1258</name>
</gene>
<feature type="chain" id="PRO_1000144282" description="Large ribosomal subunit protein uL14">
    <location>
        <begin position="1"/>
        <end position="122"/>
    </location>
</feature>
<evidence type="ECO:0000255" key="1">
    <source>
        <dbReference type="HAMAP-Rule" id="MF_01367"/>
    </source>
</evidence>
<evidence type="ECO:0000305" key="2"/>
<keyword id="KW-1185">Reference proteome</keyword>
<keyword id="KW-0687">Ribonucleoprotein</keyword>
<keyword id="KW-0689">Ribosomal protein</keyword>
<keyword id="KW-0694">RNA-binding</keyword>
<keyword id="KW-0699">rRNA-binding</keyword>
<proteinExistence type="inferred from homology"/>
<name>RL14_HELPG</name>